<sequence>MSFTEDQEKIALEILSKDKHEFYEILKVDRKATDSEIKKAYRKLAIKLHPDKNSHPKAGEAFKVINRAFEVLSNEEKRSIYDRIGRDPDDRQMPSRGAASGFRGSAGGSPMGGGFEDMFFNSRFGGQRAGPPEDIFDFLFNAGGSPFGASPFGPSASTFSFGGPGGFRVYTNNRGGSPFMRQQPRSRQQQQQAEENAVNSQLKNMLVLFIIFIVLPMIKDYLFS</sequence>
<evidence type="ECO:0000255" key="1">
    <source>
        <dbReference type="PROSITE-ProRule" id="PRU00286"/>
    </source>
</evidence>
<evidence type="ECO:0000256" key="2">
    <source>
        <dbReference type="SAM" id="MobiDB-lite"/>
    </source>
</evidence>
<evidence type="ECO:0000269" key="3">
    <source>
    </source>
</evidence>
<evidence type="ECO:0007744" key="4">
    <source>
    </source>
</evidence>
<gene>
    <name type="primary">HLJ1</name>
    <name type="ordered locus">YMR161W</name>
    <name type="ORF">YM8520.10</name>
</gene>
<keyword id="KW-0143">Chaperone</keyword>
<keyword id="KW-0597">Phosphoprotein</keyword>
<keyword id="KW-1185">Reference proteome</keyword>
<accession>P48353</accession>
<accession>D6VZY3</accession>
<protein>
    <recommendedName>
        <fullName>Protein HLJ1</fullName>
    </recommendedName>
</protein>
<reference key="1">
    <citation type="submission" date="1995-09" db="EMBL/GenBank/DDBJ databases">
        <title>HLJ1, a Saccharomyces cerevisiae homolog of Escherichia coli dnaJ with a high-copy lethal phenotype.</title>
        <authorList>
            <person name="Stepanek P."/>
            <person name="Guha S."/>
            <person name="Volkert F.C."/>
        </authorList>
    </citation>
    <scope>NUCLEOTIDE SEQUENCE [GENOMIC DNA]</scope>
    <source>
        <strain>ATCC 204508 / S288c</strain>
    </source>
</reference>
<reference key="2">
    <citation type="journal article" date="1997" name="Nature">
        <title>The nucleotide sequence of Saccharomyces cerevisiae chromosome XIII.</title>
        <authorList>
            <person name="Bowman S."/>
            <person name="Churcher C.M."/>
            <person name="Badcock K."/>
            <person name="Brown D."/>
            <person name="Chillingworth T."/>
            <person name="Connor R."/>
            <person name="Dedman K."/>
            <person name="Devlin K."/>
            <person name="Gentles S."/>
            <person name="Hamlin N."/>
            <person name="Hunt S."/>
            <person name="Jagels K."/>
            <person name="Lye G."/>
            <person name="Moule S."/>
            <person name="Odell C."/>
            <person name="Pearson D."/>
            <person name="Rajandream M.A."/>
            <person name="Rice P."/>
            <person name="Skelton J."/>
            <person name="Walsh S.V."/>
            <person name="Whitehead S."/>
            <person name="Barrell B.G."/>
        </authorList>
    </citation>
    <scope>NUCLEOTIDE SEQUENCE [LARGE SCALE GENOMIC DNA]</scope>
    <source>
        <strain>ATCC 204508 / S288c</strain>
    </source>
</reference>
<reference key="3">
    <citation type="journal article" date="2014" name="G3 (Bethesda)">
        <title>The reference genome sequence of Saccharomyces cerevisiae: Then and now.</title>
        <authorList>
            <person name="Engel S.R."/>
            <person name="Dietrich F.S."/>
            <person name="Fisk D.G."/>
            <person name="Binkley G."/>
            <person name="Balakrishnan R."/>
            <person name="Costanzo M.C."/>
            <person name="Dwight S.S."/>
            <person name="Hitz B.C."/>
            <person name="Karra K."/>
            <person name="Nash R.S."/>
            <person name="Weng S."/>
            <person name="Wong E.D."/>
            <person name="Lloyd P."/>
            <person name="Skrzypek M.S."/>
            <person name="Miyasato S.R."/>
            <person name="Simison M."/>
            <person name="Cherry J.M."/>
        </authorList>
    </citation>
    <scope>GENOME REANNOTATION</scope>
    <source>
        <strain>ATCC 204508 / S288c</strain>
    </source>
</reference>
<reference key="4">
    <citation type="journal article" date="2003" name="Nature">
        <title>Global analysis of protein expression in yeast.</title>
        <authorList>
            <person name="Ghaemmaghami S."/>
            <person name="Huh W.-K."/>
            <person name="Bower K."/>
            <person name="Howson R.W."/>
            <person name="Belle A."/>
            <person name="Dephoure N."/>
            <person name="O'Shea E.K."/>
            <person name="Weissman J.S."/>
        </authorList>
    </citation>
    <scope>LEVEL OF PROTEIN EXPRESSION [LARGE SCALE ANALYSIS]</scope>
</reference>
<reference key="5">
    <citation type="journal article" date="2007" name="J. Proteome Res.">
        <title>Large-scale phosphorylation analysis of alpha-factor-arrested Saccharomyces cerevisiae.</title>
        <authorList>
            <person name="Li X."/>
            <person name="Gerber S.A."/>
            <person name="Rudner A.D."/>
            <person name="Beausoleil S.A."/>
            <person name="Haas W."/>
            <person name="Villen J."/>
            <person name="Elias J.E."/>
            <person name="Gygi S.P."/>
        </authorList>
    </citation>
    <scope>IDENTIFICATION BY MASS SPECTROMETRY [LARGE SCALE ANALYSIS]</scope>
    <source>
        <strain>ADR376</strain>
    </source>
</reference>
<reference key="6">
    <citation type="journal article" date="2008" name="Mol. Cell. Proteomics">
        <title>A multidimensional chromatography technology for in-depth phosphoproteome analysis.</title>
        <authorList>
            <person name="Albuquerque C.P."/>
            <person name="Smolka M.B."/>
            <person name="Payne S.H."/>
            <person name="Bafna V."/>
            <person name="Eng J."/>
            <person name="Zhou H."/>
        </authorList>
    </citation>
    <scope>PHOSPHORYLATION [LARGE SCALE ANALYSIS] AT SER-109</scope>
    <scope>IDENTIFICATION BY MASS SPECTROMETRY [LARGE SCALE ANALYSIS]</scope>
</reference>
<reference key="7">
    <citation type="journal article" date="2009" name="Science">
        <title>Global analysis of Cdk1 substrate phosphorylation sites provides insights into evolution.</title>
        <authorList>
            <person name="Holt L.J."/>
            <person name="Tuch B.B."/>
            <person name="Villen J."/>
            <person name="Johnson A.D."/>
            <person name="Gygi S.P."/>
            <person name="Morgan D.O."/>
        </authorList>
    </citation>
    <scope>IDENTIFICATION BY MASS SPECTROMETRY [LARGE SCALE ANALYSIS]</scope>
</reference>
<feature type="chain" id="PRO_0000071120" description="Protein HLJ1">
    <location>
        <begin position="1"/>
        <end position="224"/>
    </location>
</feature>
<feature type="domain" description="J" evidence="1">
    <location>
        <begin position="18"/>
        <end position="87"/>
    </location>
</feature>
<feature type="region of interest" description="Disordered" evidence="2">
    <location>
        <begin position="84"/>
        <end position="107"/>
    </location>
</feature>
<feature type="region of interest" description="Disordered" evidence="2">
    <location>
        <begin position="173"/>
        <end position="192"/>
    </location>
</feature>
<feature type="compositionally biased region" description="Basic and acidic residues" evidence="2">
    <location>
        <begin position="84"/>
        <end position="93"/>
    </location>
</feature>
<feature type="compositionally biased region" description="Low complexity" evidence="2">
    <location>
        <begin position="181"/>
        <end position="192"/>
    </location>
</feature>
<feature type="modified residue" description="Phosphoserine" evidence="4">
    <location>
        <position position="109"/>
    </location>
</feature>
<name>HLJ1_YEAST</name>
<comment type="miscellaneous">
    <text evidence="3">Present with 1840 molecules/cell in log phase SD medium.</text>
</comment>
<dbReference type="EMBL" id="U19358">
    <property type="protein sequence ID" value="AAA75025.1"/>
    <property type="molecule type" value="Genomic_DNA"/>
</dbReference>
<dbReference type="EMBL" id="Z49705">
    <property type="protein sequence ID" value="CAA89797.1"/>
    <property type="molecule type" value="Genomic_DNA"/>
</dbReference>
<dbReference type="EMBL" id="BK006946">
    <property type="protein sequence ID" value="DAA10057.1"/>
    <property type="molecule type" value="Genomic_DNA"/>
</dbReference>
<dbReference type="PIR" id="S54519">
    <property type="entry name" value="S54519"/>
</dbReference>
<dbReference type="RefSeq" id="NP_013884.1">
    <property type="nucleotide sequence ID" value="NM_001182665.1"/>
</dbReference>
<dbReference type="SMR" id="P48353"/>
<dbReference type="BioGRID" id="35338">
    <property type="interactions" value="164"/>
</dbReference>
<dbReference type="FunCoup" id="P48353">
    <property type="interactions" value="240"/>
</dbReference>
<dbReference type="IntAct" id="P48353">
    <property type="interactions" value="25"/>
</dbReference>
<dbReference type="MINT" id="P48353"/>
<dbReference type="STRING" id="4932.YMR161W"/>
<dbReference type="iPTMnet" id="P48353"/>
<dbReference type="PaxDb" id="4932-YMR161W"/>
<dbReference type="PeptideAtlas" id="P48353"/>
<dbReference type="EnsemblFungi" id="YMR161W_mRNA">
    <property type="protein sequence ID" value="YMR161W"/>
    <property type="gene ID" value="YMR161W"/>
</dbReference>
<dbReference type="GeneID" id="855196"/>
<dbReference type="KEGG" id="sce:YMR161W"/>
<dbReference type="AGR" id="SGD:S000004771"/>
<dbReference type="SGD" id="S000004771">
    <property type="gene designation" value="HLJ1"/>
</dbReference>
<dbReference type="VEuPathDB" id="FungiDB:YMR161W"/>
<dbReference type="eggNOG" id="KOG0714">
    <property type="taxonomic scope" value="Eukaryota"/>
</dbReference>
<dbReference type="GeneTree" id="ENSGT00940000175793"/>
<dbReference type="HOGENOM" id="CLU_1151958_0_0_1"/>
<dbReference type="InParanoid" id="P48353"/>
<dbReference type="OMA" id="KDKHAFY"/>
<dbReference type="OrthoDB" id="1507364at2759"/>
<dbReference type="BioCyc" id="YEAST:G3O-32851-MONOMER"/>
<dbReference type="BioGRID-ORCS" id="855196">
    <property type="hits" value="0 hits in 10 CRISPR screens"/>
</dbReference>
<dbReference type="PRO" id="PR:P48353"/>
<dbReference type="Proteomes" id="UP000002311">
    <property type="component" value="Chromosome XIII"/>
</dbReference>
<dbReference type="RNAct" id="P48353">
    <property type="molecule type" value="protein"/>
</dbReference>
<dbReference type="GO" id="GO:0005783">
    <property type="term" value="C:endoplasmic reticulum"/>
    <property type="evidence" value="ECO:0007005"/>
    <property type="project" value="SGD"/>
</dbReference>
<dbReference type="GO" id="GO:0005789">
    <property type="term" value="C:endoplasmic reticulum membrane"/>
    <property type="evidence" value="ECO:0000314"/>
    <property type="project" value="SGD"/>
</dbReference>
<dbReference type="GO" id="GO:0001671">
    <property type="term" value="F:ATPase activator activity"/>
    <property type="evidence" value="ECO:0000314"/>
    <property type="project" value="SGD"/>
</dbReference>
<dbReference type="GO" id="GO:0036503">
    <property type="term" value="P:ERAD pathway"/>
    <property type="evidence" value="ECO:0000315"/>
    <property type="project" value="SGD"/>
</dbReference>
<dbReference type="CDD" id="cd06257">
    <property type="entry name" value="DnaJ"/>
    <property type="match status" value="1"/>
</dbReference>
<dbReference type="FunFam" id="1.10.287.110:FF:000120">
    <property type="entry name" value="Hlj1p"/>
    <property type="match status" value="1"/>
</dbReference>
<dbReference type="Gene3D" id="1.10.287.110">
    <property type="entry name" value="DnaJ domain"/>
    <property type="match status" value="1"/>
</dbReference>
<dbReference type="InterPro" id="IPR001623">
    <property type="entry name" value="DnaJ_domain"/>
</dbReference>
<dbReference type="InterPro" id="IPR018253">
    <property type="entry name" value="DnaJ_domain_CS"/>
</dbReference>
<dbReference type="InterPro" id="IPR051100">
    <property type="entry name" value="DnaJ_subfamily_B/C"/>
</dbReference>
<dbReference type="InterPro" id="IPR036869">
    <property type="entry name" value="J_dom_sf"/>
</dbReference>
<dbReference type="PANTHER" id="PTHR43908">
    <property type="entry name" value="AT29763P-RELATED"/>
    <property type="match status" value="1"/>
</dbReference>
<dbReference type="PANTHER" id="PTHR43908:SF3">
    <property type="entry name" value="AT29763P-RELATED"/>
    <property type="match status" value="1"/>
</dbReference>
<dbReference type="Pfam" id="PF00226">
    <property type="entry name" value="DnaJ"/>
    <property type="match status" value="1"/>
</dbReference>
<dbReference type="PRINTS" id="PR00625">
    <property type="entry name" value="JDOMAIN"/>
</dbReference>
<dbReference type="SMART" id="SM00271">
    <property type="entry name" value="DnaJ"/>
    <property type="match status" value="1"/>
</dbReference>
<dbReference type="SUPFAM" id="SSF46565">
    <property type="entry name" value="Chaperone J-domain"/>
    <property type="match status" value="1"/>
</dbReference>
<dbReference type="PROSITE" id="PS00636">
    <property type="entry name" value="DNAJ_1"/>
    <property type="match status" value="1"/>
</dbReference>
<dbReference type="PROSITE" id="PS50076">
    <property type="entry name" value="DNAJ_2"/>
    <property type="match status" value="1"/>
</dbReference>
<proteinExistence type="evidence at protein level"/>
<organism>
    <name type="scientific">Saccharomyces cerevisiae (strain ATCC 204508 / S288c)</name>
    <name type="common">Baker's yeast</name>
    <dbReference type="NCBI Taxonomy" id="559292"/>
    <lineage>
        <taxon>Eukaryota</taxon>
        <taxon>Fungi</taxon>
        <taxon>Dikarya</taxon>
        <taxon>Ascomycota</taxon>
        <taxon>Saccharomycotina</taxon>
        <taxon>Saccharomycetes</taxon>
        <taxon>Saccharomycetales</taxon>
        <taxon>Saccharomycetaceae</taxon>
        <taxon>Saccharomyces</taxon>
    </lineage>
</organism>